<gene>
    <name evidence="1" type="primary">mutH</name>
    <name type="ordered locus">VC_0668</name>
</gene>
<dbReference type="EMBL" id="AE003852">
    <property type="protein sequence ID" value="AAF93833.1"/>
    <property type="molecule type" value="Genomic_DNA"/>
</dbReference>
<dbReference type="PIR" id="D82294">
    <property type="entry name" value="D82294"/>
</dbReference>
<dbReference type="RefSeq" id="NP_230317.1">
    <property type="nucleotide sequence ID" value="NC_002505.1"/>
</dbReference>
<dbReference type="RefSeq" id="WP_000801221.1">
    <property type="nucleotide sequence ID" value="NZ_LT906614.1"/>
</dbReference>
<dbReference type="SMR" id="Q9KU56"/>
<dbReference type="STRING" id="243277.VC_0668"/>
<dbReference type="DNASU" id="2615457"/>
<dbReference type="EnsemblBacteria" id="AAF93833">
    <property type="protein sequence ID" value="AAF93833"/>
    <property type="gene ID" value="VC_0668"/>
</dbReference>
<dbReference type="KEGG" id="vch:VC_0668"/>
<dbReference type="PATRIC" id="fig|243277.26.peg.641"/>
<dbReference type="eggNOG" id="COG3066">
    <property type="taxonomic scope" value="Bacteria"/>
</dbReference>
<dbReference type="HOGENOM" id="CLU_086669_0_0_6"/>
<dbReference type="Proteomes" id="UP000000584">
    <property type="component" value="Chromosome 1"/>
</dbReference>
<dbReference type="GO" id="GO:0005737">
    <property type="term" value="C:cytoplasm"/>
    <property type="evidence" value="ECO:0007669"/>
    <property type="project" value="UniProtKB-SubCell"/>
</dbReference>
<dbReference type="GO" id="GO:0003677">
    <property type="term" value="F:DNA binding"/>
    <property type="evidence" value="ECO:0007669"/>
    <property type="project" value="InterPro"/>
</dbReference>
<dbReference type="GO" id="GO:0004519">
    <property type="term" value="F:endonuclease activity"/>
    <property type="evidence" value="ECO:0007669"/>
    <property type="project" value="UniProtKB-UniRule"/>
</dbReference>
<dbReference type="GO" id="GO:0006304">
    <property type="term" value="P:DNA modification"/>
    <property type="evidence" value="ECO:0007669"/>
    <property type="project" value="InterPro"/>
</dbReference>
<dbReference type="GO" id="GO:0006298">
    <property type="term" value="P:mismatch repair"/>
    <property type="evidence" value="ECO:0007669"/>
    <property type="project" value="UniProtKB-UniRule"/>
</dbReference>
<dbReference type="CDD" id="cd00583">
    <property type="entry name" value="MutH-like"/>
    <property type="match status" value="1"/>
</dbReference>
<dbReference type="FunFam" id="3.40.600.10:FF:000001">
    <property type="entry name" value="DNA mismatch repair protein MutH"/>
    <property type="match status" value="1"/>
</dbReference>
<dbReference type="Gene3D" id="3.40.600.10">
    <property type="entry name" value="DNA mismatch repair MutH/Restriction endonuclease, type II"/>
    <property type="match status" value="1"/>
</dbReference>
<dbReference type="HAMAP" id="MF_00759">
    <property type="entry name" value="MutH"/>
    <property type="match status" value="1"/>
</dbReference>
<dbReference type="InterPro" id="IPR004230">
    <property type="entry name" value="DNA_mismatch_repair_MutH"/>
</dbReference>
<dbReference type="InterPro" id="IPR011337">
    <property type="entry name" value="DNA_rep_MutH/RE_typeII_Sau3AI"/>
</dbReference>
<dbReference type="InterPro" id="IPR037057">
    <property type="entry name" value="DNA_rep_MutH/T2_RE_sf"/>
</dbReference>
<dbReference type="InterPro" id="IPR011335">
    <property type="entry name" value="Restrct_endonuc-II-like"/>
</dbReference>
<dbReference type="NCBIfam" id="TIGR02248">
    <property type="entry name" value="mutH_TIGR"/>
    <property type="match status" value="1"/>
</dbReference>
<dbReference type="NCBIfam" id="NF003458">
    <property type="entry name" value="PRK05070.1"/>
    <property type="match status" value="1"/>
</dbReference>
<dbReference type="Pfam" id="PF02976">
    <property type="entry name" value="MutH"/>
    <property type="match status" value="1"/>
</dbReference>
<dbReference type="SMART" id="SM00927">
    <property type="entry name" value="MutH"/>
    <property type="match status" value="1"/>
</dbReference>
<dbReference type="SUPFAM" id="SSF52980">
    <property type="entry name" value="Restriction endonuclease-like"/>
    <property type="match status" value="1"/>
</dbReference>
<protein>
    <recommendedName>
        <fullName evidence="1">DNA mismatch repair protein MutH</fullName>
    </recommendedName>
    <alternativeName>
        <fullName evidence="1">Methyl-directed mismatch repair protein</fullName>
    </alternativeName>
</protein>
<reference key="1">
    <citation type="journal article" date="2000" name="Nature">
        <title>DNA sequence of both chromosomes of the cholera pathogen Vibrio cholerae.</title>
        <authorList>
            <person name="Heidelberg J.F."/>
            <person name="Eisen J.A."/>
            <person name="Nelson W.C."/>
            <person name="Clayton R.A."/>
            <person name="Gwinn M.L."/>
            <person name="Dodson R.J."/>
            <person name="Haft D.H."/>
            <person name="Hickey E.K."/>
            <person name="Peterson J.D."/>
            <person name="Umayam L.A."/>
            <person name="Gill S.R."/>
            <person name="Nelson K.E."/>
            <person name="Read T.D."/>
            <person name="Tettelin H."/>
            <person name="Richardson D.L."/>
            <person name="Ermolaeva M.D."/>
            <person name="Vamathevan J.J."/>
            <person name="Bass S."/>
            <person name="Qin H."/>
            <person name="Dragoi I."/>
            <person name="Sellers P."/>
            <person name="McDonald L.A."/>
            <person name="Utterback T.R."/>
            <person name="Fleischmann R.D."/>
            <person name="Nierman W.C."/>
            <person name="White O."/>
            <person name="Salzberg S.L."/>
            <person name="Smith H.O."/>
            <person name="Colwell R.R."/>
            <person name="Mekalanos J.J."/>
            <person name="Venter J.C."/>
            <person name="Fraser C.M."/>
        </authorList>
    </citation>
    <scope>NUCLEOTIDE SEQUENCE [LARGE SCALE GENOMIC DNA]</scope>
    <source>
        <strain>ATCC 39315 / El Tor Inaba N16961</strain>
    </source>
</reference>
<proteinExistence type="inferred from homology"/>
<accession>Q9KU56</accession>
<sequence>MKPAPTTQQELLTRAQQIAGLSFAELADEAGMTVPPDLRKDKGWVGQLLEWHLGATAGSRPQQDFEHLGIELKSIPISYTGKPLETTFVCVAPLTGVHGLTWEQSHVRNKLSKVLWIPVQGEREIPLAERCVGSPLLWSPSPEEEAQLKADWEELMEWIVLGKVAQITAKHGEVLQLRPKAANGRALTEAYGANGRPIKALPRGFYLRTQFTAQILQRYYA</sequence>
<organism>
    <name type="scientific">Vibrio cholerae serotype O1 (strain ATCC 39315 / El Tor Inaba N16961)</name>
    <dbReference type="NCBI Taxonomy" id="243277"/>
    <lineage>
        <taxon>Bacteria</taxon>
        <taxon>Pseudomonadati</taxon>
        <taxon>Pseudomonadota</taxon>
        <taxon>Gammaproteobacteria</taxon>
        <taxon>Vibrionales</taxon>
        <taxon>Vibrionaceae</taxon>
        <taxon>Vibrio</taxon>
    </lineage>
</organism>
<feature type="chain" id="PRO_0000198676" description="DNA mismatch repair protein MutH">
    <location>
        <begin position="1"/>
        <end position="221"/>
    </location>
</feature>
<evidence type="ECO:0000255" key="1">
    <source>
        <dbReference type="HAMAP-Rule" id="MF_00759"/>
    </source>
</evidence>
<comment type="function">
    <text evidence="1">Sequence-specific endonuclease that cleaves unmethylated GATC sequences. It is involved in DNA mismatch repair.</text>
</comment>
<comment type="subcellular location">
    <subcellularLocation>
        <location evidence="1">Cytoplasm</location>
    </subcellularLocation>
</comment>
<comment type="similarity">
    <text evidence="1">Belongs to the MutH family.</text>
</comment>
<name>MUTH_VIBCH</name>
<keyword id="KW-0963">Cytoplasm</keyword>
<keyword id="KW-0227">DNA damage</keyword>
<keyword id="KW-0234">DNA repair</keyword>
<keyword id="KW-0255">Endonuclease</keyword>
<keyword id="KW-0378">Hydrolase</keyword>
<keyword id="KW-0540">Nuclease</keyword>
<keyword id="KW-1185">Reference proteome</keyword>